<comment type="function">
    <text evidence="1">One of the primary rRNA binding proteins, it binds specifically to the 5'-end of 16S ribosomal RNA.</text>
</comment>
<comment type="subunit">
    <text evidence="1">Part of the 30S ribosomal subunit.</text>
</comment>
<comment type="similarity">
    <text evidence="1">Belongs to the universal ribosomal protein uS17 family.</text>
</comment>
<gene>
    <name evidence="1" type="primary">rpsQ</name>
    <name type="ordered locus">MT0737</name>
</gene>
<reference key="1">
    <citation type="journal article" date="2002" name="J. Bacteriol.">
        <title>Whole-genome comparison of Mycobacterium tuberculosis clinical and laboratory strains.</title>
        <authorList>
            <person name="Fleischmann R.D."/>
            <person name="Alland D."/>
            <person name="Eisen J.A."/>
            <person name="Carpenter L."/>
            <person name="White O."/>
            <person name="Peterson J.D."/>
            <person name="DeBoy R.T."/>
            <person name="Dodson R.J."/>
            <person name="Gwinn M.L."/>
            <person name="Haft D.H."/>
            <person name="Hickey E.K."/>
            <person name="Kolonay J.F."/>
            <person name="Nelson W.C."/>
            <person name="Umayam L.A."/>
            <person name="Ermolaeva M.D."/>
            <person name="Salzberg S.L."/>
            <person name="Delcher A."/>
            <person name="Utterback T.R."/>
            <person name="Weidman J.F."/>
            <person name="Khouri H.M."/>
            <person name="Gill J."/>
            <person name="Mikula A."/>
            <person name="Bishai W."/>
            <person name="Jacobs W.R. Jr."/>
            <person name="Venter J.C."/>
            <person name="Fraser C.M."/>
        </authorList>
    </citation>
    <scope>NUCLEOTIDE SEQUENCE [LARGE SCALE GENOMIC DNA]</scope>
    <source>
        <strain>CDC 1551 / Oshkosh</strain>
    </source>
</reference>
<dbReference type="EMBL" id="AE000516">
    <property type="protein sequence ID" value="AAK44968.1"/>
    <property type="molecule type" value="Genomic_DNA"/>
</dbReference>
<dbReference type="PIR" id="A70643">
    <property type="entry name" value="A70643"/>
</dbReference>
<dbReference type="SMR" id="P9WH50"/>
<dbReference type="KEGG" id="mtc:MT0737"/>
<dbReference type="HOGENOM" id="CLU_073626_1_0_11"/>
<dbReference type="Proteomes" id="UP000001020">
    <property type="component" value="Chromosome"/>
</dbReference>
<dbReference type="GO" id="GO:0022627">
    <property type="term" value="C:cytosolic small ribosomal subunit"/>
    <property type="evidence" value="ECO:0007669"/>
    <property type="project" value="TreeGrafter"/>
</dbReference>
<dbReference type="GO" id="GO:0019843">
    <property type="term" value="F:rRNA binding"/>
    <property type="evidence" value="ECO:0007669"/>
    <property type="project" value="UniProtKB-UniRule"/>
</dbReference>
<dbReference type="GO" id="GO:0003735">
    <property type="term" value="F:structural constituent of ribosome"/>
    <property type="evidence" value="ECO:0007669"/>
    <property type="project" value="InterPro"/>
</dbReference>
<dbReference type="GO" id="GO:0006412">
    <property type="term" value="P:translation"/>
    <property type="evidence" value="ECO:0007669"/>
    <property type="project" value="UniProtKB-UniRule"/>
</dbReference>
<dbReference type="CDD" id="cd00364">
    <property type="entry name" value="Ribosomal_uS17"/>
    <property type="match status" value="1"/>
</dbReference>
<dbReference type="FunFam" id="2.40.50.140:FF:000026">
    <property type="entry name" value="30S ribosomal protein S17"/>
    <property type="match status" value="1"/>
</dbReference>
<dbReference type="Gene3D" id="2.40.50.140">
    <property type="entry name" value="Nucleic acid-binding proteins"/>
    <property type="match status" value="1"/>
</dbReference>
<dbReference type="HAMAP" id="MF_01345_B">
    <property type="entry name" value="Ribosomal_uS17_B"/>
    <property type="match status" value="1"/>
</dbReference>
<dbReference type="InterPro" id="IPR012340">
    <property type="entry name" value="NA-bd_OB-fold"/>
</dbReference>
<dbReference type="InterPro" id="IPR000266">
    <property type="entry name" value="Ribosomal_uS17"/>
</dbReference>
<dbReference type="InterPro" id="IPR019984">
    <property type="entry name" value="Ribosomal_uS17_bact/chlr"/>
</dbReference>
<dbReference type="InterPro" id="IPR019979">
    <property type="entry name" value="Ribosomal_uS17_CS"/>
</dbReference>
<dbReference type="NCBIfam" id="NF004123">
    <property type="entry name" value="PRK05610.1"/>
    <property type="match status" value="1"/>
</dbReference>
<dbReference type="NCBIfam" id="TIGR03635">
    <property type="entry name" value="uS17_bact"/>
    <property type="match status" value="1"/>
</dbReference>
<dbReference type="PANTHER" id="PTHR10744">
    <property type="entry name" value="40S RIBOSOMAL PROTEIN S11 FAMILY MEMBER"/>
    <property type="match status" value="1"/>
</dbReference>
<dbReference type="PANTHER" id="PTHR10744:SF1">
    <property type="entry name" value="SMALL RIBOSOMAL SUBUNIT PROTEIN US17M"/>
    <property type="match status" value="1"/>
</dbReference>
<dbReference type="Pfam" id="PF00366">
    <property type="entry name" value="Ribosomal_S17"/>
    <property type="match status" value="1"/>
</dbReference>
<dbReference type="PRINTS" id="PR00973">
    <property type="entry name" value="RIBOSOMALS17"/>
</dbReference>
<dbReference type="SUPFAM" id="SSF50249">
    <property type="entry name" value="Nucleic acid-binding proteins"/>
    <property type="match status" value="1"/>
</dbReference>
<dbReference type="PROSITE" id="PS00056">
    <property type="entry name" value="RIBOSOMAL_S17"/>
    <property type="match status" value="1"/>
</dbReference>
<name>RS17_MYCTO</name>
<evidence type="ECO:0000255" key="1">
    <source>
        <dbReference type="HAMAP-Rule" id="MF_01345"/>
    </source>
</evidence>
<evidence type="ECO:0000256" key="2">
    <source>
        <dbReference type="SAM" id="MobiDB-lite"/>
    </source>
</evidence>
<evidence type="ECO:0000305" key="3"/>
<proteinExistence type="inferred from homology"/>
<keyword id="KW-1185">Reference proteome</keyword>
<keyword id="KW-0687">Ribonucleoprotein</keyword>
<keyword id="KW-0689">Ribosomal protein</keyword>
<keyword id="KW-0694">RNA-binding</keyword>
<keyword id="KW-0699">rRNA-binding</keyword>
<sequence>MAEAKTGAKAAPRVAKAAKAAPKKAAPNDAEAIGAANAANVKGPKHTPRTPKPRGRRKTRIGYVVSDKMQKTIVVELEDRMRHPLYGKIIRTTKKVKAHDEDSVAGIGDRVSLMETRPLSATKRWRLVEILEKAK</sequence>
<protein>
    <recommendedName>
        <fullName evidence="1">Small ribosomal subunit protein uS17</fullName>
    </recommendedName>
    <alternativeName>
        <fullName evidence="3">30S ribosomal protein S17</fullName>
    </alternativeName>
</protein>
<accession>P9WH50</accession>
<accession>L0T692</accession>
<accession>P95058</accession>
<organism>
    <name type="scientific">Mycobacterium tuberculosis (strain CDC 1551 / Oshkosh)</name>
    <dbReference type="NCBI Taxonomy" id="83331"/>
    <lineage>
        <taxon>Bacteria</taxon>
        <taxon>Bacillati</taxon>
        <taxon>Actinomycetota</taxon>
        <taxon>Actinomycetes</taxon>
        <taxon>Mycobacteriales</taxon>
        <taxon>Mycobacteriaceae</taxon>
        <taxon>Mycobacterium</taxon>
        <taxon>Mycobacterium tuberculosis complex</taxon>
    </lineage>
</organism>
<feature type="chain" id="PRO_0000428248" description="Small ribosomal subunit protein uS17">
    <location>
        <begin position="1"/>
        <end position="135"/>
    </location>
</feature>
<feature type="region of interest" description="Disordered" evidence="2">
    <location>
        <begin position="1"/>
        <end position="59"/>
    </location>
</feature>
<feature type="compositionally biased region" description="Low complexity" evidence="2">
    <location>
        <begin position="8"/>
        <end position="42"/>
    </location>
</feature>
<feature type="compositionally biased region" description="Basic residues" evidence="2">
    <location>
        <begin position="43"/>
        <end position="59"/>
    </location>
</feature>